<name>RECR_PECAS</name>
<dbReference type="EMBL" id="BX950851">
    <property type="protein sequence ID" value="CAG74088.1"/>
    <property type="molecule type" value="Genomic_DNA"/>
</dbReference>
<dbReference type="RefSeq" id="WP_011092769.1">
    <property type="nucleotide sequence ID" value="NC_004547.2"/>
</dbReference>
<dbReference type="SMR" id="Q6D7Z7"/>
<dbReference type="STRING" id="218491.ECA1178"/>
<dbReference type="GeneID" id="57207990"/>
<dbReference type="KEGG" id="eca:ECA1178"/>
<dbReference type="PATRIC" id="fig|218491.5.peg.1193"/>
<dbReference type="eggNOG" id="COG0353">
    <property type="taxonomic scope" value="Bacteria"/>
</dbReference>
<dbReference type="HOGENOM" id="CLU_060739_1_2_6"/>
<dbReference type="OrthoDB" id="9802672at2"/>
<dbReference type="Proteomes" id="UP000007966">
    <property type="component" value="Chromosome"/>
</dbReference>
<dbReference type="GO" id="GO:0003677">
    <property type="term" value="F:DNA binding"/>
    <property type="evidence" value="ECO:0007669"/>
    <property type="project" value="UniProtKB-UniRule"/>
</dbReference>
<dbReference type="GO" id="GO:0008270">
    <property type="term" value="F:zinc ion binding"/>
    <property type="evidence" value="ECO:0007669"/>
    <property type="project" value="UniProtKB-KW"/>
</dbReference>
<dbReference type="GO" id="GO:0006310">
    <property type="term" value="P:DNA recombination"/>
    <property type="evidence" value="ECO:0007669"/>
    <property type="project" value="UniProtKB-UniRule"/>
</dbReference>
<dbReference type="GO" id="GO:0006281">
    <property type="term" value="P:DNA repair"/>
    <property type="evidence" value="ECO:0007669"/>
    <property type="project" value="UniProtKB-UniRule"/>
</dbReference>
<dbReference type="CDD" id="cd01025">
    <property type="entry name" value="TOPRIM_recR"/>
    <property type="match status" value="1"/>
</dbReference>
<dbReference type="FunFam" id="1.10.8.420:FF:000001">
    <property type="entry name" value="Recombination protein RecR"/>
    <property type="match status" value="1"/>
</dbReference>
<dbReference type="FunFam" id="3.40.1360.10:FF:000001">
    <property type="entry name" value="Recombination protein RecR"/>
    <property type="match status" value="1"/>
</dbReference>
<dbReference type="Gene3D" id="3.30.60.80">
    <property type="match status" value="1"/>
</dbReference>
<dbReference type="Gene3D" id="3.40.1360.10">
    <property type="match status" value="1"/>
</dbReference>
<dbReference type="Gene3D" id="6.10.250.240">
    <property type="match status" value="1"/>
</dbReference>
<dbReference type="Gene3D" id="1.10.8.420">
    <property type="entry name" value="RecR Domain 1"/>
    <property type="match status" value="1"/>
</dbReference>
<dbReference type="HAMAP" id="MF_00017">
    <property type="entry name" value="RecR"/>
    <property type="match status" value="1"/>
</dbReference>
<dbReference type="InterPro" id="IPR000093">
    <property type="entry name" value="DNA_Rcmb_RecR"/>
</dbReference>
<dbReference type="InterPro" id="IPR023627">
    <property type="entry name" value="Rcmb_RecR"/>
</dbReference>
<dbReference type="InterPro" id="IPR015967">
    <property type="entry name" value="Rcmb_RecR_Znf"/>
</dbReference>
<dbReference type="InterPro" id="IPR006171">
    <property type="entry name" value="TOPRIM_dom"/>
</dbReference>
<dbReference type="InterPro" id="IPR034137">
    <property type="entry name" value="TOPRIM_RecR"/>
</dbReference>
<dbReference type="NCBIfam" id="TIGR00615">
    <property type="entry name" value="recR"/>
    <property type="match status" value="1"/>
</dbReference>
<dbReference type="PANTHER" id="PTHR30446">
    <property type="entry name" value="RECOMBINATION PROTEIN RECR"/>
    <property type="match status" value="1"/>
</dbReference>
<dbReference type="PANTHER" id="PTHR30446:SF0">
    <property type="entry name" value="RECOMBINATION PROTEIN RECR"/>
    <property type="match status" value="1"/>
</dbReference>
<dbReference type="Pfam" id="PF21175">
    <property type="entry name" value="RecR_C"/>
    <property type="match status" value="1"/>
</dbReference>
<dbReference type="Pfam" id="PF21176">
    <property type="entry name" value="RecR_HhH"/>
    <property type="match status" value="1"/>
</dbReference>
<dbReference type="Pfam" id="PF02132">
    <property type="entry name" value="RecR_ZnF"/>
    <property type="match status" value="1"/>
</dbReference>
<dbReference type="Pfam" id="PF13662">
    <property type="entry name" value="Toprim_4"/>
    <property type="match status" value="1"/>
</dbReference>
<dbReference type="SMART" id="SM00493">
    <property type="entry name" value="TOPRIM"/>
    <property type="match status" value="1"/>
</dbReference>
<dbReference type="SUPFAM" id="SSF111304">
    <property type="entry name" value="Recombination protein RecR"/>
    <property type="match status" value="1"/>
</dbReference>
<dbReference type="PROSITE" id="PS01300">
    <property type="entry name" value="RECR"/>
    <property type="match status" value="1"/>
</dbReference>
<dbReference type="PROSITE" id="PS50880">
    <property type="entry name" value="TOPRIM"/>
    <property type="match status" value="1"/>
</dbReference>
<keyword id="KW-0227">DNA damage</keyword>
<keyword id="KW-0233">DNA recombination</keyword>
<keyword id="KW-0234">DNA repair</keyword>
<keyword id="KW-0479">Metal-binding</keyword>
<keyword id="KW-1185">Reference proteome</keyword>
<keyword id="KW-0862">Zinc</keyword>
<keyword id="KW-0863">Zinc-finger</keyword>
<sequence length="201" mass="21737">MQTSPLLESLMEALRCLPGVGPRSAQRMAFQLLQRNRSGGMRLAQALTQAMSEIGHCSDCRTFTEQDVCAICSNPRRQQNGLVCVVESPADIHAIEQTGQFAGRYFVLMGHLSPLDGIGPDDIGLGRLEERLQVESFNEVILATNPTVEGDATANYIAELCAQHGVMASRIAHGVPVGGELEMVDGTTLSHSLAGRQPFRF</sequence>
<protein>
    <recommendedName>
        <fullName evidence="1">Recombination protein RecR</fullName>
    </recommendedName>
</protein>
<gene>
    <name evidence="1" type="primary">recR</name>
    <name type="ordered locus">ECA1178</name>
</gene>
<feature type="chain" id="PRO_0000190320" description="Recombination protein RecR">
    <location>
        <begin position="1"/>
        <end position="201"/>
    </location>
</feature>
<feature type="domain" description="Toprim" evidence="1">
    <location>
        <begin position="81"/>
        <end position="176"/>
    </location>
</feature>
<feature type="zinc finger region" description="C4-type" evidence="1">
    <location>
        <begin position="57"/>
        <end position="72"/>
    </location>
</feature>
<evidence type="ECO:0000255" key="1">
    <source>
        <dbReference type="HAMAP-Rule" id="MF_00017"/>
    </source>
</evidence>
<proteinExistence type="inferred from homology"/>
<organism>
    <name type="scientific">Pectobacterium atrosepticum (strain SCRI 1043 / ATCC BAA-672)</name>
    <name type="common">Erwinia carotovora subsp. atroseptica</name>
    <dbReference type="NCBI Taxonomy" id="218491"/>
    <lineage>
        <taxon>Bacteria</taxon>
        <taxon>Pseudomonadati</taxon>
        <taxon>Pseudomonadota</taxon>
        <taxon>Gammaproteobacteria</taxon>
        <taxon>Enterobacterales</taxon>
        <taxon>Pectobacteriaceae</taxon>
        <taxon>Pectobacterium</taxon>
    </lineage>
</organism>
<accession>Q6D7Z7</accession>
<reference key="1">
    <citation type="journal article" date="2004" name="Proc. Natl. Acad. Sci. U.S.A.">
        <title>Genome sequence of the enterobacterial phytopathogen Erwinia carotovora subsp. atroseptica and characterization of virulence factors.</title>
        <authorList>
            <person name="Bell K.S."/>
            <person name="Sebaihia M."/>
            <person name="Pritchard L."/>
            <person name="Holden M.T.G."/>
            <person name="Hyman L.J."/>
            <person name="Holeva M.C."/>
            <person name="Thomson N.R."/>
            <person name="Bentley S.D."/>
            <person name="Churcher L.J.C."/>
            <person name="Mungall K."/>
            <person name="Atkin R."/>
            <person name="Bason N."/>
            <person name="Brooks K."/>
            <person name="Chillingworth T."/>
            <person name="Clark K."/>
            <person name="Doggett J."/>
            <person name="Fraser A."/>
            <person name="Hance Z."/>
            <person name="Hauser H."/>
            <person name="Jagels K."/>
            <person name="Moule S."/>
            <person name="Norbertczak H."/>
            <person name="Ormond D."/>
            <person name="Price C."/>
            <person name="Quail M.A."/>
            <person name="Sanders M."/>
            <person name="Walker D."/>
            <person name="Whitehead S."/>
            <person name="Salmond G.P.C."/>
            <person name="Birch P.R.J."/>
            <person name="Parkhill J."/>
            <person name="Toth I.K."/>
        </authorList>
    </citation>
    <scope>NUCLEOTIDE SEQUENCE [LARGE SCALE GENOMIC DNA]</scope>
    <source>
        <strain>SCRI 1043 / ATCC BAA-672</strain>
    </source>
</reference>
<comment type="function">
    <text evidence="1">May play a role in DNA repair. It seems to be involved in an RecBC-independent recombinational process of DNA repair. It may act with RecF and RecO.</text>
</comment>
<comment type="similarity">
    <text evidence="1">Belongs to the RecR family.</text>
</comment>